<dbReference type="EMBL" id="AY818616">
    <property type="protein sequence ID" value="AAW80683.1"/>
    <property type="molecule type" value="Genomic_DNA"/>
</dbReference>
<dbReference type="SMR" id="Q5EP15"/>
<dbReference type="GO" id="GO:0005615">
    <property type="term" value="C:extracellular space"/>
    <property type="evidence" value="ECO:0000250"/>
    <property type="project" value="UniProtKB"/>
</dbReference>
<dbReference type="GO" id="GO:0005550">
    <property type="term" value="F:pheromone binding"/>
    <property type="evidence" value="ECO:0007669"/>
    <property type="project" value="UniProtKB-KW"/>
</dbReference>
<dbReference type="GO" id="GO:0019236">
    <property type="term" value="P:response to pheromone"/>
    <property type="evidence" value="ECO:0007669"/>
    <property type="project" value="UniProtKB-KW"/>
</dbReference>
<dbReference type="GO" id="GO:0035176">
    <property type="term" value="P:social behavior"/>
    <property type="evidence" value="ECO:0000250"/>
    <property type="project" value="UniProtKB"/>
</dbReference>
<dbReference type="CDD" id="cd23992">
    <property type="entry name" value="PBP_GOBP"/>
    <property type="match status" value="1"/>
</dbReference>
<dbReference type="FunFam" id="1.10.238.20:FF:000004">
    <property type="entry name" value="Pheromone-binding protein Gp-9"/>
    <property type="match status" value="1"/>
</dbReference>
<dbReference type="Gene3D" id="1.10.238.20">
    <property type="entry name" value="Pheromone/general odorant binding protein domain"/>
    <property type="match status" value="1"/>
</dbReference>
<dbReference type="InterPro" id="IPR006170">
    <property type="entry name" value="PBP/GOBP"/>
</dbReference>
<dbReference type="InterPro" id="IPR036728">
    <property type="entry name" value="PBP_GOBP_sf"/>
</dbReference>
<dbReference type="InterPro" id="IPR022354">
    <property type="entry name" value="Pheromone-bd_protein_Gp-9"/>
</dbReference>
<dbReference type="Pfam" id="PF01395">
    <property type="entry name" value="PBP_GOBP"/>
    <property type="match status" value="1"/>
</dbReference>
<dbReference type="PRINTS" id="PR02007">
    <property type="entry name" value="ODORANTBPGP9"/>
</dbReference>
<dbReference type="SUPFAM" id="SSF47565">
    <property type="entry name" value="Insect pheromone/odorant-binding proteins"/>
    <property type="match status" value="1"/>
</dbReference>
<organism>
    <name type="scientific">Solenopsis substituta</name>
    <name type="common">Fire ant</name>
    <dbReference type="NCBI Taxonomy" id="310433"/>
    <lineage>
        <taxon>Eukaryota</taxon>
        <taxon>Metazoa</taxon>
        <taxon>Ecdysozoa</taxon>
        <taxon>Arthropoda</taxon>
        <taxon>Hexapoda</taxon>
        <taxon>Insecta</taxon>
        <taxon>Pterygota</taxon>
        <taxon>Neoptera</taxon>
        <taxon>Endopterygota</taxon>
        <taxon>Hymenoptera</taxon>
        <taxon>Apocrita</taxon>
        <taxon>Aculeata</taxon>
        <taxon>Formicoidea</taxon>
        <taxon>Formicidae</taxon>
        <taxon>Myrmicinae</taxon>
        <taxon>Solenopsis</taxon>
    </lineage>
</organism>
<evidence type="ECO:0000250" key="1"/>
<evidence type="ECO:0000250" key="2">
    <source>
        <dbReference type="UniProtKB" id="P20797"/>
    </source>
</evidence>
<evidence type="ECO:0000250" key="3">
    <source>
        <dbReference type="UniProtKB" id="Q8WP90"/>
    </source>
</evidence>
<evidence type="ECO:0000255" key="4"/>
<evidence type="ECO:0000305" key="5"/>
<evidence type="ECO:0000312" key="6">
    <source>
        <dbReference type="EMBL" id="AAW80683.1"/>
    </source>
</evidence>
<accession>Q5EP15</accession>
<keyword id="KW-0085">Behavior</keyword>
<keyword id="KW-1015">Disulfide bond</keyword>
<keyword id="KW-0589">Pheromone response</keyword>
<keyword id="KW-0590">Pheromone-binding</keyword>
<keyword id="KW-0964">Secreted</keyword>
<keyword id="KW-0732">Signal</keyword>
<keyword id="KW-0813">Transport</keyword>
<gene>
    <name evidence="6" type="primary">Gp-9</name>
</gene>
<comment type="function">
    <text evidence="3">Colony queen number, a major feature of social organization, is associated with worker genotype for Gp-9. Colonies are headed by either a single reproductive queen (monogyne form) or multiple queens (polygyne form). Differences in worker Gp-9 genotypes between social forms may cause differences in workers' abilities to recognize queens and regulate their numbers (By similarity).</text>
</comment>
<comment type="subunit">
    <text evidence="2">Homodimer.</text>
</comment>
<comment type="subcellular location">
    <subcellularLocation>
        <location evidence="1">Secreted</location>
    </subcellularLocation>
</comment>
<comment type="similarity">
    <text evidence="4">Belongs to the PBP/GOBP family.</text>
</comment>
<reference evidence="5 6" key="1">
    <citation type="journal article" date="2005" name="Mol. Biol. Evol.">
        <title>Molecular evolutionary analyses of the odorant-binding protein gene Gp-9 in fire ants and other Solenopsis species.</title>
        <authorList>
            <person name="Krieger M.J.B."/>
            <person name="Ross K.G."/>
        </authorList>
    </citation>
    <scope>NUCLEOTIDE SEQUENCE [GENOMIC DNA] (ALLELE B)</scope>
</reference>
<sequence length="153" mass="16882">MKTFVLHIFIFALVAFASASRDSAKKIGSQYDNYETCLTEHGLTDDDIFSIGEVSSGQHKTNHEDTELHKNGCVMQCMLEKDGLMSGADYDEEKMREDYIKETGAQPGDQRIEALNACMQETKDMEDKCDKSLILVACVLAAEVVLADSSEGA</sequence>
<protein>
    <recommendedName>
        <fullName>Pheromone-binding protein Gp-9</fullName>
        <shortName>PBP</shortName>
    </recommendedName>
    <alternativeName>
        <fullName>Putative odorant-binding protein Gp-9</fullName>
    </alternativeName>
</protein>
<feature type="signal peptide" evidence="3">
    <location>
        <begin position="1"/>
        <end position="19"/>
    </location>
</feature>
<feature type="chain" id="PRO_5000094260" description="Pheromone-binding protein Gp-9" evidence="3">
    <location>
        <begin position="20"/>
        <end position="153"/>
    </location>
</feature>
<feature type="disulfide bond" evidence="2">
    <location>
        <begin position="37"/>
        <end position="77"/>
    </location>
</feature>
<feature type="disulfide bond" evidence="2">
    <location>
        <begin position="73"/>
        <end position="129"/>
    </location>
</feature>
<feature type="disulfide bond" evidence="2">
    <location>
        <begin position="118"/>
        <end position="138"/>
    </location>
</feature>
<name>PBGP9_SOLSU</name>
<proteinExistence type="inferred from homology"/>